<geneLocation type="chloroplast"/>
<gene>
    <name type="primary">ycf34</name>
</gene>
<proteinExistence type="predicted"/>
<feature type="chain" id="PRO_0000277273" description="Uncharacterized protein ycf34">
    <location>
        <begin position="1"/>
        <end position="76"/>
    </location>
</feature>
<keyword id="KW-0150">Chloroplast</keyword>
<keyword id="KW-0934">Plastid</keyword>
<dbReference type="EMBL" id="AP006715">
    <property type="protein sequence ID" value="BAE92353.1"/>
    <property type="molecule type" value="Genomic_DNA"/>
</dbReference>
<dbReference type="RefSeq" id="YP_536910.1">
    <property type="nucleotide sequence ID" value="NC_007932.1"/>
</dbReference>
<dbReference type="GO" id="GO:0009507">
    <property type="term" value="C:chloroplast"/>
    <property type="evidence" value="ECO:0007669"/>
    <property type="project" value="UniProtKB-SubCell"/>
</dbReference>
<dbReference type="InterPro" id="IPR019656">
    <property type="entry name" value="Uncharacterised_Ycf34"/>
</dbReference>
<dbReference type="Pfam" id="PF10718">
    <property type="entry name" value="Ycf34"/>
    <property type="match status" value="1"/>
</dbReference>
<protein>
    <recommendedName>
        <fullName>Uncharacterized protein ycf34</fullName>
    </recommendedName>
</protein>
<accession>Q1XDQ8</accession>
<name>YCF34_PYRYE</name>
<comment type="subcellular location">
    <subcellularLocation>
        <location>Plastid</location>
        <location>Chloroplast</location>
    </subcellularLocation>
</comment>
<sequence>MCICINCNHITKCNTYHLIESQHKQPHLTRSPLFIPKYPVVHVNISNNCTYNQIDWDLVECLSFVEKPNSWNLDAN</sequence>
<reference key="1">
    <citation type="submission" date="2003-11" db="EMBL/GenBank/DDBJ databases">
        <title>Whole genome sequence of Porphyra yezoensis chloroplast.</title>
        <authorList>
            <person name="Kunimoto M."/>
            <person name="Morishima K."/>
            <person name="Yoshikawa M."/>
            <person name="Fukuda S."/>
            <person name="Kobayashi T."/>
            <person name="Kobayashi M."/>
            <person name="Okazaki T."/>
            <person name="Ohara I."/>
            <person name="Nakayama I."/>
        </authorList>
    </citation>
    <scope>NUCLEOTIDE SEQUENCE [LARGE SCALE GENOMIC DNA]</scope>
    <source>
        <strain>U-51</strain>
    </source>
</reference>
<organism>
    <name type="scientific">Pyropia yezoensis</name>
    <name type="common">Susabi-nori</name>
    <name type="synonym">Porphyra yezoensis</name>
    <dbReference type="NCBI Taxonomy" id="2788"/>
    <lineage>
        <taxon>Eukaryota</taxon>
        <taxon>Rhodophyta</taxon>
        <taxon>Bangiophyceae</taxon>
        <taxon>Bangiales</taxon>
        <taxon>Bangiaceae</taxon>
        <taxon>Pyropia</taxon>
    </lineage>
</organism>